<comment type="function">
    <text evidence="1">Reduces organic and inorganic peroxide substrates. Protects the cell against oxidative stress (By similarity).</text>
</comment>
<comment type="subunit">
    <text evidence="2">Homodimer.</text>
</comment>
<comment type="subcellular location">
    <subcellularLocation>
        <location evidence="1">Cytoplasm</location>
    </subcellularLocation>
</comment>
<comment type="similarity">
    <text evidence="3">Belongs to the OsmC/Ohr family.</text>
</comment>
<name>HPRR_MYCPN</name>
<organism>
    <name type="scientific">Mycoplasma pneumoniae (strain ATCC 29342 / M129 / Subtype 1)</name>
    <name type="common">Mycoplasmoides pneumoniae</name>
    <dbReference type="NCBI Taxonomy" id="272634"/>
    <lineage>
        <taxon>Bacteria</taxon>
        <taxon>Bacillati</taxon>
        <taxon>Mycoplasmatota</taxon>
        <taxon>Mycoplasmoidales</taxon>
        <taxon>Mycoplasmoidaceae</taxon>
        <taxon>Mycoplasmoides</taxon>
    </lineage>
</organism>
<gene>
    <name type="ordered locus">MPN_625</name>
    <name type="ORF">C12_orf141</name>
    <name type="ORF">MP217</name>
</gene>
<reference key="1">
    <citation type="journal article" date="1996" name="Nucleic Acids Res.">
        <title>Complete sequence analysis of the genome of the bacterium Mycoplasma pneumoniae.</title>
        <authorList>
            <person name="Himmelreich R."/>
            <person name="Hilbert H."/>
            <person name="Plagens H."/>
            <person name="Pirkl E."/>
            <person name="Li B.-C."/>
            <person name="Herrmann R."/>
        </authorList>
    </citation>
    <scope>NUCLEOTIDE SEQUENCE [LARGE SCALE GENOMIC DNA]</scope>
    <source>
        <strain>ATCC 29342 / M129 / Subtype 1</strain>
    </source>
</reference>
<reference key="2">
    <citation type="journal article" date="2003" name="J. Struct. Funct. Genomics">
        <title>Crystal structure of a stress inducible protein from Mycoplasma pneumoniae at 2.85 A resolution.</title>
        <authorList>
            <person name="Choi I.G."/>
            <person name="Shin D.H."/>
            <person name="Brandsen J."/>
            <person name="Jancarik J."/>
            <person name="Busso D."/>
            <person name="Yokota H."/>
            <person name="Kim R."/>
            <person name="Kim S.H."/>
        </authorList>
    </citation>
    <scope>X-RAY CRYSTALLOGRAPHY (2.85 ANGSTROMS)</scope>
    <scope>SUBUNIT</scope>
</reference>
<feature type="chain" id="PRO_0000210607" description="Hydroperoxide reductase">
    <location>
        <begin position="1"/>
        <end position="141"/>
    </location>
</feature>
<feature type="strand" evidence="4">
    <location>
        <begin position="3"/>
        <end position="11"/>
    </location>
</feature>
<feature type="helix" evidence="4">
    <location>
        <begin position="13"/>
        <end position="15"/>
    </location>
</feature>
<feature type="strand" evidence="4">
    <location>
        <begin position="17"/>
        <end position="21"/>
    </location>
</feature>
<feature type="strand" evidence="4">
    <location>
        <begin position="24"/>
        <end position="28"/>
    </location>
</feature>
<feature type="turn" evidence="4">
    <location>
        <begin position="33"/>
        <end position="35"/>
    </location>
</feature>
<feature type="helix" evidence="4">
    <location>
        <begin position="41"/>
        <end position="64"/>
    </location>
</feature>
<feature type="strand" evidence="4">
    <location>
        <begin position="69"/>
        <end position="79"/>
    </location>
</feature>
<feature type="strand" evidence="4">
    <location>
        <begin position="84"/>
        <end position="86"/>
    </location>
</feature>
<feature type="strand" evidence="4">
    <location>
        <begin position="89"/>
        <end position="100"/>
    </location>
</feature>
<feature type="helix" evidence="4">
    <location>
        <begin position="105"/>
        <end position="118"/>
    </location>
</feature>
<feature type="helix" evidence="4">
    <location>
        <begin position="120"/>
        <end position="126"/>
    </location>
</feature>
<feature type="strand" evidence="4">
    <location>
        <begin position="132"/>
        <end position="140"/>
    </location>
</feature>
<sequence length="141" mass="15469">MDKKYDITAVLNEDSSMTAISDQFQITLDARPKHTAKGFGPLAALLSGLAACELATANLMAPAKMITINKLLMNVTGSRSTNPTDGYFGLREINLHWEIHSPNSETEIKEFIDFVSKRCPAHNTLQGVSQLKINVNVTLVH</sequence>
<evidence type="ECO:0000250" key="1"/>
<evidence type="ECO:0000269" key="2">
    <source>
    </source>
</evidence>
<evidence type="ECO:0000305" key="3"/>
<evidence type="ECO:0007829" key="4">
    <source>
        <dbReference type="PDB" id="1LQL"/>
    </source>
</evidence>
<accession>P75170</accession>
<protein>
    <recommendedName>
        <fullName>Hydroperoxide reductase</fullName>
        <ecNumber>1.11.1.-</ecNumber>
    </recommendedName>
</protein>
<dbReference type="EC" id="1.11.1.-"/>
<dbReference type="EMBL" id="U00089">
    <property type="protein sequence ID" value="AAB95865.1"/>
    <property type="molecule type" value="Genomic_DNA"/>
</dbReference>
<dbReference type="PIR" id="S73543">
    <property type="entry name" value="S73543"/>
</dbReference>
<dbReference type="RefSeq" id="NP_110314.1">
    <property type="nucleotide sequence ID" value="NC_000912.1"/>
</dbReference>
<dbReference type="RefSeq" id="WP_010874982.1">
    <property type="nucleotide sequence ID" value="NZ_OU342337.1"/>
</dbReference>
<dbReference type="PDB" id="1LQL">
    <property type="method" value="X-ray"/>
    <property type="resolution" value="2.85 A"/>
    <property type="chains" value="A/B/C/D/E/F/G/H/I/J=1-141"/>
</dbReference>
<dbReference type="PDBsum" id="1LQL"/>
<dbReference type="SMR" id="P75170"/>
<dbReference type="STRING" id="272634.MPN_625"/>
<dbReference type="EnsemblBacteria" id="AAB95865">
    <property type="protein sequence ID" value="AAB95865"/>
    <property type="gene ID" value="MPN_625"/>
</dbReference>
<dbReference type="KEGG" id="mpn:MPN_625"/>
<dbReference type="PATRIC" id="fig|272634.6.peg.689"/>
<dbReference type="HOGENOM" id="CLU_1862951_0_0_14"/>
<dbReference type="OrthoDB" id="384648at2"/>
<dbReference type="BioCyc" id="MPNE272634:G1GJ3-1005-MONOMER"/>
<dbReference type="EvolutionaryTrace" id="P75170"/>
<dbReference type="Proteomes" id="UP000000808">
    <property type="component" value="Chromosome"/>
</dbReference>
<dbReference type="GO" id="GO:0005737">
    <property type="term" value="C:cytoplasm"/>
    <property type="evidence" value="ECO:0007669"/>
    <property type="project" value="UniProtKB-SubCell"/>
</dbReference>
<dbReference type="GO" id="GO:0004601">
    <property type="term" value="F:peroxidase activity"/>
    <property type="evidence" value="ECO:0007669"/>
    <property type="project" value="UniProtKB-KW"/>
</dbReference>
<dbReference type="Gene3D" id="2.20.25.10">
    <property type="match status" value="1"/>
</dbReference>
<dbReference type="Gene3D" id="3.30.300.20">
    <property type="match status" value="1"/>
</dbReference>
<dbReference type="InterPro" id="IPR015946">
    <property type="entry name" value="KH_dom-like_a/b"/>
</dbReference>
<dbReference type="InterPro" id="IPR003718">
    <property type="entry name" value="OsmC/Ohr_fam"/>
</dbReference>
<dbReference type="InterPro" id="IPR052924">
    <property type="entry name" value="OsmC/Ohr_hydroprdx_reductase"/>
</dbReference>
<dbReference type="InterPro" id="IPR036102">
    <property type="entry name" value="OsmC/Ohrsf"/>
</dbReference>
<dbReference type="PANTHER" id="PTHR35368">
    <property type="entry name" value="HYDROPEROXIDE REDUCTASE"/>
    <property type="match status" value="1"/>
</dbReference>
<dbReference type="PANTHER" id="PTHR35368:SF1">
    <property type="entry name" value="HYDROPEROXIDE REDUCTASE"/>
    <property type="match status" value="1"/>
</dbReference>
<dbReference type="Pfam" id="PF02566">
    <property type="entry name" value="OsmC"/>
    <property type="match status" value="1"/>
</dbReference>
<dbReference type="SUPFAM" id="SSF82784">
    <property type="entry name" value="OsmC-like"/>
    <property type="match status" value="1"/>
</dbReference>
<keyword id="KW-0002">3D-structure</keyword>
<keyword id="KW-0963">Cytoplasm</keyword>
<keyword id="KW-0560">Oxidoreductase</keyword>
<keyword id="KW-0575">Peroxidase</keyword>
<keyword id="KW-1185">Reference proteome</keyword>
<proteinExistence type="evidence at protein level"/>